<organism>
    <name type="scientific">Arabidopsis thaliana</name>
    <name type="common">Mouse-ear cress</name>
    <dbReference type="NCBI Taxonomy" id="3702"/>
    <lineage>
        <taxon>Eukaryota</taxon>
        <taxon>Viridiplantae</taxon>
        <taxon>Streptophyta</taxon>
        <taxon>Embryophyta</taxon>
        <taxon>Tracheophyta</taxon>
        <taxon>Spermatophyta</taxon>
        <taxon>Magnoliopsida</taxon>
        <taxon>eudicotyledons</taxon>
        <taxon>Gunneridae</taxon>
        <taxon>Pentapetalae</taxon>
        <taxon>rosids</taxon>
        <taxon>malvids</taxon>
        <taxon>Brassicales</taxon>
        <taxon>Brassicaceae</taxon>
        <taxon>Camelineae</taxon>
        <taxon>Arabidopsis</taxon>
    </lineage>
</organism>
<proteinExistence type="inferred from homology"/>
<protein>
    <recommendedName>
        <fullName evidence="3">Amino acid transporter AVT1F</fullName>
        <shortName evidence="2">AtAvt1F</shortName>
    </recommendedName>
</protein>
<dbReference type="EMBL" id="AC011436">
    <property type="protein sequence ID" value="AAF14031.1"/>
    <property type="status" value="ALT_SEQ"/>
    <property type="molecule type" value="Genomic_DNA"/>
</dbReference>
<dbReference type="EMBL" id="CP002686">
    <property type="protein sequence ID" value="AEE74752.1"/>
    <property type="molecule type" value="Genomic_DNA"/>
</dbReference>
<dbReference type="RefSeq" id="NP_187545.2">
    <property type="nucleotide sequence ID" value="NM_111768.3"/>
</dbReference>
<dbReference type="SMR" id="F4IZW8"/>
<dbReference type="FunCoup" id="F4IZW8">
    <property type="interactions" value="267"/>
</dbReference>
<dbReference type="PaxDb" id="3702-AT3G09340.1"/>
<dbReference type="EnsemblPlants" id="AT3G09340.1">
    <property type="protein sequence ID" value="AT3G09340.1"/>
    <property type="gene ID" value="AT3G09340"/>
</dbReference>
<dbReference type="GeneID" id="820090"/>
<dbReference type="Gramene" id="AT3G09340.1">
    <property type="protein sequence ID" value="AT3G09340.1"/>
    <property type="gene ID" value="AT3G09340"/>
</dbReference>
<dbReference type="KEGG" id="ath:AT3G09340"/>
<dbReference type="Araport" id="AT3G09340"/>
<dbReference type="TAIR" id="AT3G09340"/>
<dbReference type="eggNOG" id="KOG1303">
    <property type="taxonomic scope" value="Eukaryota"/>
</dbReference>
<dbReference type="HOGENOM" id="CLU_009646_1_0_1"/>
<dbReference type="InParanoid" id="F4IZW8"/>
<dbReference type="OMA" id="FGENTNP"/>
<dbReference type="PRO" id="PR:F4IZW8"/>
<dbReference type="Proteomes" id="UP000006548">
    <property type="component" value="Chromosome 3"/>
</dbReference>
<dbReference type="ExpressionAtlas" id="F4IZW8">
    <property type="expression patterns" value="baseline and differential"/>
</dbReference>
<dbReference type="GO" id="GO:0031090">
    <property type="term" value="C:organelle membrane"/>
    <property type="evidence" value="ECO:0007669"/>
    <property type="project" value="UniProtKB-ARBA"/>
</dbReference>
<dbReference type="GO" id="GO:0006865">
    <property type="term" value="P:amino acid transport"/>
    <property type="evidence" value="ECO:0007669"/>
    <property type="project" value="UniProtKB-KW"/>
</dbReference>
<dbReference type="FunFam" id="1.20.1740.10:FF:000047">
    <property type="entry name" value="Amino acid transporter AVT1A"/>
    <property type="match status" value="1"/>
</dbReference>
<dbReference type="InterPro" id="IPR013057">
    <property type="entry name" value="AA_transpt_TM"/>
</dbReference>
<dbReference type="PANTHER" id="PTHR22950">
    <property type="entry name" value="AMINO ACID TRANSPORTER"/>
    <property type="match status" value="1"/>
</dbReference>
<dbReference type="PANTHER" id="PTHR22950:SF692">
    <property type="entry name" value="TRANSMEMBRANE AMINO ACID TRANSPORTER FAMILY PROTEIN"/>
    <property type="match status" value="1"/>
</dbReference>
<dbReference type="Pfam" id="PF01490">
    <property type="entry name" value="Aa_trans"/>
    <property type="match status" value="1"/>
</dbReference>
<sequence length="528" mass="57452">MDLEEQERDILIQTDDDDCHVDVSYVNDDDDSNASFSLSQNDSAFWPQSYRHSVDLLTGVTPPMVSFIQGRSTETSFSSSIASLYKRRPTSIANSFVSSTSKQPLLSEKDDVSFLSSQVGLSNTDLSYGEPNFCSFPQSVLNGINVLCGISLLTMPYAVKEGGWLGLCILLSFAIITCYTGILLKRCLESSSDLRTYPDIGQAAFGFTGRLIISILLYMELYVCCVEYIIMMSDNLSRVFPNITLNIVGVSLDSPQIFAISATLIVLPTVWLKDLSLLSYLSAGGVFVSILLALCLFWVGSVDGVGFHTGGKALDLANLPVAIGIFGFGFSGHAVLPSIYSSMKEPSKFPLVLLISFGFCVFFYIAVAICGYSMFGEAIQSQFTLNMPQQYTASKIAVWTAVVVPMTKYALALTPIVLGLEELMPPSEKMRSYGVSIFIKTILVLSTLVVALTFPFFAIMGALMGSFLATLVDFIFPCLCYLSILKGRLSKTQIGICVFIIISGIVSGCCGTYSAIGRLVGELNWMVQ</sequence>
<evidence type="ECO:0000255" key="1"/>
<evidence type="ECO:0000303" key="2">
    <source>
    </source>
</evidence>
<evidence type="ECO:0000305" key="3"/>
<evidence type="ECO:0000312" key="4">
    <source>
        <dbReference type="Araport" id="AT3G09340"/>
    </source>
</evidence>
<evidence type="ECO:0000312" key="5">
    <source>
        <dbReference type="EMBL" id="AAF14031.1"/>
    </source>
</evidence>
<keyword id="KW-0029">Amino-acid transport</keyword>
<keyword id="KW-0472">Membrane</keyword>
<keyword id="KW-1185">Reference proteome</keyword>
<keyword id="KW-0812">Transmembrane</keyword>
<keyword id="KW-1133">Transmembrane helix</keyword>
<keyword id="KW-0813">Transport</keyword>
<feature type="chain" id="PRO_0000440107" description="Amino acid transporter AVT1F">
    <location>
        <begin position="1"/>
        <end position="528"/>
    </location>
</feature>
<feature type="transmembrane region" description="Helical; Name=1" evidence="1">
    <location>
        <begin position="139"/>
        <end position="159"/>
    </location>
</feature>
<feature type="transmembrane region" description="Helical; Name=2" evidence="1">
    <location>
        <begin position="164"/>
        <end position="184"/>
    </location>
</feature>
<feature type="transmembrane region" description="Helical; Name=3" evidence="1">
    <location>
        <begin position="211"/>
        <end position="231"/>
    </location>
</feature>
<feature type="transmembrane region" description="Helical; Name=4" evidence="1">
    <location>
        <begin position="247"/>
        <end position="267"/>
    </location>
</feature>
<feature type="transmembrane region" description="Helical; Name=5" evidence="1">
    <location>
        <begin position="280"/>
        <end position="300"/>
    </location>
</feature>
<feature type="transmembrane region" description="Helical; Name=6" evidence="1">
    <location>
        <begin position="319"/>
        <end position="339"/>
    </location>
</feature>
<feature type="transmembrane region" description="Helical; Name=7" evidence="1">
    <location>
        <begin position="349"/>
        <end position="369"/>
    </location>
</feature>
<feature type="transmembrane region" description="Helical; Name=8" evidence="1">
    <location>
        <begin position="398"/>
        <end position="418"/>
    </location>
</feature>
<feature type="transmembrane region" description="Helical; Name=9" evidence="1">
    <location>
        <begin position="442"/>
        <end position="462"/>
    </location>
</feature>
<feature type="transmembrane region" description="Helical; Name=10" evidence="1">
    <location>
        <begin position="465"/>
        <end position="485"/>
    </location>
</feature>
<feature type="transmembrane region" description="Helical; Name=11" evidence="1">
    <location>
        <begin position="496"/>
        <end position="516"/>
    </location>
</feature>
<reference key="1">
    <citation type="journal article" date="2000" name="Nature">
        <title>Sequence and analysis of chromosome 3 of the plant Arabidopsis thaliana.</title>
        <authorList>
            <person name="Salanoubat M."/>
            <person name="Lemcke K."/>
            <person name="Rieger M."/>
            <person name="Ansorge W."/>
            <person name="Unseld M."/>
            <person name="Fartmann B."/>
            <person name="Valle G."/>
            <person name="Bloecker H."/>
            <person name="Perez-Alonso M."/>
            <person name="Obermaier B."/>
            <person name="Delseny M."/>
            <person name="Boutry M."/>
            <person name="Grivell L.A."/>
            <person name="Mache R."/>
            <person name="Puigdomenech P."/>
            <person name="De Simone V."/>
            <person name="Choisne N."/>
            <person name="Artiguenave F."/>
            <person name="Robert C."/>
            <person name="Brottier P."/>
            <person name="Wincker P."/>
            <person name="Cattolico L."/>
            <person name="Weissenbach J."/>
            <person name="Saurin W."/>
            <person name="Quetier F."/>
            <person name="Schaefer M."/>
            <person name="Mueller-Auer S."/>
            <person name="Gabel C."/>
            <person name="Fuchs M."/>
            <person name="Benes V."/>
            <person name="Wurmbach E."/>
            <person name="Drzonek H."/>
            <person name="Erfle H."/>
            <person name="Jordan N."/>
            <person name="Bangert S."/>
            <person name="Wiedelmann R."/>
            <person name="Kranz H."/>
            <person name="Voss H."/>
            <person name="Holland R."/>
            <person name="Brandt P."/>
            <person name="Nyakatura G."/>
            <person name="Vezzi A."/>
            <person name="D'Angelo M."/>
            <person name="Pallavicini A."/>
            <person name="Toppo S."/>
            <person name="Simionati B."/>
            <person name="Conrad A."/>
            <person name="Hornischer K."/>
            <person name="Kauer G."/>
            <person name="Loehnert T.-H."/>
            <person name="Nordsiek G."/>
            <person name="Reichelt J."/>
            <person name="Scharfe M."/>
            <person name="Schoen O."/>
            <person name="Bargues M."/>
            <person name="Terol J."/>
            <person name="Climent J."/>
            <person name="Navarro P."/>
            <person name="Collado C."/>
            <person name="Perez-Perez A."/>
            <person name="Ottenwaelder B."/>
            <person name="Duchemin D."/>
            <person name="Cooke R."/>
            <person name="Laudie M."/>
            <person name="Berger-Llauro C."/>
            <person name="Purnelle B."/>
            <person name="Masuy D."/>
            <person name="de Haan M."/>
            <person name="Maarse A.C."/>
            <person name="Alcaraz J.-P."/>
            <person name="Cottet A."/>
            <person name="Casacuberta E."/>
            <person name="Monfort A."/>
            <person name="Argiriou A."/>
            <person name="Flores M."/>
            <person name="Liguori R."/>
            <person name="Vitale D."/>
            <person name="Mannhaupt G."/>
            <person name="Haase D."/>
            <person name="Schoof H."/>
            <person name="Rudd S."/>
            <person name="Zaccaria P."/>
            <person name="Mewes H.-W."/>
            <person name="Mayer K.F.X."/>
            <person name="Kaul S."/>
            <person name="Town C.D."/>
            <person name="Koo H.L."/>
            <person name="Tallon L.J."/>
            <person name="Jenkins J."/>
            <person name="Rooney T."/>
            <person name="Rizzo M."/>
            <person name="Walts A."/>
            <person name="Utterback T."/>
            <person name="Fujii C.Y."/>
            <person name="Shea T.P."/>
            <person name="Creasy T.H."/>
            <person name="Haas B."/>
            <person name="Maiti R."/>
            <person name="Wu D."/>
            <person name="Peterson J."/>
            <person name="Van Aken S."/>
            <person name="Pai G."/>
            <person name="Militscher J."/>
            <person name="Sellers P."/>
            <person name="Gill J.E."/>
            <person name="Feldblyum T.V."/>
            <person name="Preuss D."/>
            <person name="Lin X."/>
            <person name="Nierman W.C."/>
            <person name="Salzberg S.L."/>
            <person name="White O."/>
            <person name="Venter J.C."/>
            <person name="Fraser C.M."/>
            <person name="Kaneko T."/>
            <person name="Nakamura Y."/>
            <person name="Sato S."/>
            <person name="Kato T."/>
            <person name="Asamizu E."/>
            <person name="Sasamoto S."/>
            <person name="Kimura T."/>
            <person name="Idesawa K."/>
            <person name="Kawashima K."/>
            <person name="Kishida Y."/>
            <person name="Kiyokawa C."/>
            <person name="Kohara M."/>
            <person name="Matsumoto M."/>
            <person name="Matsuno A."/>
            <person name="Muraki A."/>
            <person name="Nakayama S."/>
            <person name="Nakazaki N."/>
            <person name="Shinpo S."/>
            <person name="Takeuchi C."/>
            <person name="Wada T."/>
            <person name="Watanabe A."/>
            <person name="Yamada M."/>
            <person name="Yasuda M."/>
            <person name="Tabata S."/>
        </authorList>
    </citation>
    <scope>NUCLEOTIDE SEQUENCE [LARGE SCALE GENOMIC DNA]</scope>
    <source>
        <strain>cv. Columbia</strain>
    </source>
</reference>
<reference key="2">
    <citation type="journal article" date="2017" name="Plant J.">
        <title>Araport11: a complete reannotation of the Arabidopsis thaliana reference genome.</title>
        <authorList>
            <person name="Cheng C.Y."/>
            <person name="Krishnakumar V."/>
            <person name="Chan A.P."/>
            <person name="Thibaud-Nissen F."/>
            <person name="Schobel S."/>
            <person name="Town C.D."/>
        </authorList>
    </citation>
    <scope>GENOME REANNOTATION</scope>
    <source>
        <strain>cv. Columbia</strain>
    </source>
</reference>
<reference key="3">
    <citation type="journal article" date="2017" name="FEBS Lett.">
        <title>Functional identification of AtAVT3, a family of vacuolar amino acid transporters, in Arabidopsis.</title>
        <authorList>
            <person name="Fujiki Y."/>
            <person name="Teshima H."/>
            <person name="Kashiwao S."/>
            <person name="Kawano-Kawada M."/>
            <person name="Ohsumi Y."/>
            <person name="Kakinuma Y."/>
            <person name="Sekito T."/>
        </authorList>
    </citation>
    <scope>GENE FAMILY</scope>
    <scope>NOMENCLATURE</scope>
</reference>
<name>AVT1F_ARATH</name>
<gene>
    <name evidence="2" type="primary">AVT1F</name>
    <name evidence="4" type="ordered locus">At3g09340</name>
    <name evidence="5" type="ORF">F3L24.21</name>
</gene>
<comment type="subcellular location">
    <subcellularLocation>
        <location evidence="1">Membrane</location>
        <topology evidence="1">Multi-pass membrane protein</topology>
    </subcellularLocation>
</comment>
<comment type="similarity">
    <text evidence="3">Belongs to the amino acid/polyamine transporter 2 family. Amino acid/auxin permease (AAAP) (TC 2.A.18.5) subfamily.</text>
</comment>
<comment type="sequence caution" evidence="3">
    <conflict type="erroneous gene model prediction">
        <sequence resource="EMBL-CDS" id="AAF14031"/>
    </conflict>
</comment>
<accession>F4IZW8</accession>
<accession>Q9SR29</accession>